<dbReference type="EMBL" id="AJ002962">
    <property type="protein sequence ID" value="CAA05773.1"/>
    <property type="molecule type" value="mRNA"/>
</dbReference>
<dbReference type="EMBL" id="D88648">
    <property type="protein sequence ID" value="BAA23645.1"/>
    <property type="molecule type" value="mRNA"/>
</dbReference>
<dbReference type="EMBL" id="U51338">
    <property type="protein sequence ID" value="AAB87141.1"/>
    <property type="molecule type" value="mRNA"/>
</dbReference>
<dbReference type="EMBL" id="D50373">
    <property type="protein sequence ID" value="BAA23324.1"/>
    <property type="molecule type" value="mRNA"/>
</dbReference>
<dbReference type="EMBL" id="U81235">
    <property type="protein sequence ID" value="AAD00507.1"/>
    <property type="molecule type" value="mRNA"/>
</dbReference>
<dbReference type="EMBL" id="CR457057">
    <property type="protein sequence ID" value="CAG33338.1"/>
    <property type="molecule type" value="mRNA"/>
</dbReference>
<dbReference type="EMBL" id="AK289836">
    <property type="protein sequence ID" value="BAF82525.1"/>
    <property type="molecule type" value="mRNA"/>
</dbReference>
<dbReference type="EMBL" id="AK311867">
    <property type="protein sequence ID" value="BAG34808.1"/>
    <property type="molecule type" value="mRNA"/>
</dbReference>
<dbReference type="EMBL" id="AL512688">
    <property type="protein sequence ID" value="CAC21646.1"/>
    <property type="molecule type" value="mRNA"/>
</dbReference>
<dbReference type="EMBL" id="AL645811">
    <property type="status" value="NOT_ANNOTATED_CDS"/>
    <property type="molecule type" value="Genomic_DNA"/>
</dbReference>
<dbReference type="EMBL" id="CH471051">
    <property type="protein sequence ID" value="EAW48166.1"/>
    <property type="molecule type" value="Genomic_DNA"/>
</dbReference>
<dbReference type="EMBL" id="CH471051">
    <property type="protein sequence ID" value="EAW48167.1"/>
    <property type="molecule type" value="Genomic_DNA"/>
</dbReference>
<dbReference type="EMBL" id="BC012299">
    <property type="protein sequence ID" value="AAH12299.1"/>
    <property type="molecule type" value="mRNA"/>
</dbReference>
<dbReference type="CCDS" id="CCDS5127.1">
    <molecule id="O15540-1"/>
</dbReference>
<dbReference type="CCDS" id="CCDS83121.1">
    <molecule id="O15540-2"/>
</dbReference>
<dbReference type="RefSeq" id="NP_001305968.1">
    <molecule id="O15540-2"/>
    <property type="nucleotide sequence ID" value="NM_001319039.2"/>
</dbReference>
<dbReference type="RefSeq" id="NP_001437.1">
    <molecule id="O15540-1"/>
    <property type="nucleotide sequence ID" value="NM_001446.5"/>
</dbReference>
<dbReference type="PDB" id="1FDQ">
    <property type="method" value="X-ray"/>
    <property type="resolution" value="2.10 A"/>
    <property type="chains" value="A/B=2-132"/>
</dbReference>
<dbReference type="PDB" id="1FE3">
    <property type="method" value="X-ray"/>
    <property type="resolution" value="2.80 A"/>
    <property type="chains" value="A=2-132"/>
</dbReference>
<dbReference type="PDB" id="1JJX">
    <property type="method" value="NMR"/>
    <property type="chains" value="A=2-132"/>
</dbReference>
<dbReference type="PDB" id="5URA">
    <property type="method" value="X-ray"/>
    <property type="resolution" value="1.85 A"/>
    <property type="chains" value="A/B/C/D=1-132"/>
</dbReference>
<dbReference type="PDB" id="6L9O">
    <property type="method" value="X-ray"/>
    <property type="resolution" value="1.42 A"/>
    <property type="chains" value="A=1-132"/>
</dbReference>
<dbReference type="PDB" id="7E25">
    <property type="method" value="X-ray"/>
    <property type="resolution" value="1.60 A"/>
    <property type="chains" value="A=1-132"/>
</dbReference>
<dbReference type="PDB" id="8IVF">
    <property type="method" value="X-ray"/>
    <property type="resolution" value="2.60 A"/>
    <property type="chains" value="A/B=1-132"/>
</dbReference>
<dbReference type="PDB" id="8IVL">
    <property type="method" value="X-ray"/>
    <property type="resolution" value="2.70 A"/>
    <property type="chains" value="A=1-132"/>
</dbReference>
<dbReference type="PDBsum" id="1FDQ"/>
<dbReference type="PDBsum" id="1FE3"/>
<dbReference type="PDBsum" id="1JJX"/>
<dbReference type="PDBsum" id="5URA"/>
<dbReference type="PDBsum" id="6L9O"/>
<dbReference type="PDBsum" id="7E25"/>
<dbReference type="PDBsum" id="8IVF"/>
<dbReference type="PDBsum" id="8IVL"/>
<dbReference type="BMRB" id="O15540"/>
<dbReference type="SMR" id="O15540"/>
<dbReference type="BioGRID" id="108471">
    <property type="interactions" value="17"/>
</dbReference>
<dbReference type="FunCoup" id="O15540">
    <property type="interactions" value="387"/>
</dbReference>
<dbReference type="IntAct" id="O15540">
    <property type="interactions" value="12"/>
</dbReference>
<dbReference type="STRING" id="9606.ENSP00000348931"/>
<dbReference type="BindingDB" id="O15540"/>
<dbReference type="ChEMBL" id="CHEMBL3826863"/>
<dbReference type="DrugBank" id="DB00132">
    <property type="generic name" value="alpha-Linolenic acid"/>
</dbReference>
<dbReference type="DrugBank" id="DB00154">
    <property type="generic name" value="Dihomo-gamma-linolenic acid"/>
</dbReference>
<dbReference type="DrugBank" id="DB00159">
    <property type="generic name" value="Icosapent"/>
</dbReference>
<dbReference type="DrugBank" id="DB04224">
    <property type="generic name" value="Oleic Acid"/>
</dbReference>
<dbReference type="SwissLipids" id="SLP:000000498"/>
<dbReference type="iPTMnet" id="O15540"/>
<dbReference type="PhosphoSitePlus" id="O15540"/>
<dbReference type="BioMuta" id="FABP7"/>
<dbReference type="jPOST" id="O15540"/>
<dbReference type="MassIVE" id="O15540"/>
<dbReference type="PaxDb" id="9606-ENSP00000357429"/>
<dbReference type="PeptideAtlas" id="O15540"/>
<dbReference type="ProteomicsDB" id="48748">
    <molecule id="O15540-1"/>
</dbReference>
<dbReference type="ProteomicsDB" id="80204"/>
<dbReference type="Antibodypedia" id="19513">
    <property type="antibodies" value="607 antibodies from 41 providers"/>
</dbReference>
<dbReference type="DNASU" id="2173"/>
<dbReference type="Ensembl" id="ENST00000356535.4">
    <molecule id="O15540-2"/>
    <property type="protein sequence ID" value="ENSP00000348931.4"/>
    <property type="gene ID" value="ENSG00000164434.12"/>
</dbReference>
<dbReference type="Ensembl" id="ENST00000368444.8">
    <molecule id="O15540-1"/>
    <property type="protein sequence ID" value="ENSP00000357429.3"/>
    <property type="gene ID" value="ENSG00000164434.12"/>
</dbReference>
<dbReference type="GeneID" id="2173"/>
<dbReference type="KEGG" id="hsa:2173"/>
<dbReference type="MANE-Select" id="ENST00000368444.8">
    <property type="protein sequence ID" value="ENSP00000357429.3"/>
    <property type="RefSeq nucleotide sequence ID" value="NM_001446.5"/>
    <property type="RefSeq protein sequence ID" value="NP_001437.1"/>
</dbReference>
<dbReference type="UCSC" id="uc003pzd.4">
    <molecule id="O15540-1"/>
    <property type="organism name" value="human"/>
</dbReference>
<dbReference type="AGR" id="HGNC:3562"/>
<dbReference type="CTD" id="2173"/>
<dbReference type="DisGeNET" id="2173"/>
<dbReference type="GeneCards" id="FABP7"/>
<dbReference type="HGNC" id="HGNC:3562">
    <property type="gene designation" value="FABP7"/>
</dbReference>
<dbReference type="HPA" id="ENSG00000164434">
    <property type="expression patterns" value="Group enriched (brain, retina, tongue)"/>
</dbReference>
<dbReference type="MalaCards" id="FABP7"/>
<dbReference type="MIM" id="602965">
    <property type="type" value="gene"/>
</dbReference>
<dbReference type="neXtProt" id="NX_O15540"/>
<dbReference type="OpenTargets" id="ENSG00000164434"/>
<dbReference type="PharmGKB" id="PA27963"/>
<dbReference type="VEuPathDB" id="HostDB:ENSG00000164434"/>
<dbReference type="eggNOG" id="KOG4015">
    <property type="taxonomic scope" value="Eukaryota"/>
</dbReference>
<dbReference type="GeneTree" id="ENSGT00940000156713"/>
<dbReference type="HOGENOM" id="CLU_113772_0_0_1"/>
<dbReference type="InParanoid" id="O15540"/>
<dbReference type="OMA" id="VAIRHYE"/>
<dbReference type="OrthoDB" id="354351at2759"/>
<dbReference type="PAN-GO" id="O15540">
    <property type="GO annotations" value="4 GO annotations based on evolutionary models"/>
</dbReference>
<dbReference type="PhylomeDB" id="O15540"/>
<dbReference type="TreeFam" id="TF316894"/>
<dbReference type="PathwayCommons" id="O15540"/>
<dbReference type="Reactome" id="R-HSA-163560">
    <property type="pathway name" value="Triglyceride catabolism"/>
</dbReference>
<dbReference type="Reactome" id="R-HSA-9013508">
    <property type="pathway name" value="NOTCH3 Intracellular Domain Regulates Transcription"/>
</dbReference>
<dbReference type="SignaLink" id="O15540"/>
<dbReference type="SIGNOR" id="O15540"/>
<dbReference type="BioGRID-ORCS" id="2173">
    <property type="hits" value="10 hits in 1136 CRISPR screens"/>
</dbReference>
<dbReference type="CD-CODE" id="FB4E32DD">
    <property type="entry name" value="Presynaptic clusters and postsynaptic densities"/>
</dbReference>
<dbReference type="ChiTaRS" id="FABP7">
    <property type="organism name" value="human"/>
</dbReference>
<dbReference type="EvolutionaryTrace" id="O15540"/>
<dbReference type="GeneWiki" id="FABP7"/>
<dbReference type="GenomeRNAi" id="2173"/>
<dbReference type="Pharos" id="O15540">
    <property type="development level" value="Tchem"/>
</dbReference>
<dbReference type="PRO" id="PR:O15540"/>
<dbReference type="Proteomes" id="UP000005640">
    <property type="component" value="Chromosome 6"/>
</dbReference>
<dbReference type="RNAct" id="O15540">
    <property type="molecule type" value="protein"/>
</dbReference>
<dbReference type="Bgee" id="ENSG00000164434">
    <property type="expression patterns" value="Expressed in ventricular zone and 159 other cell types or tissues"/>
</dbReference>
<dbReference type="GO" id="GO:0005829">
    <property type="term" value="C:cytosol"/>
    <property type="evidence" value="ECO:0000318"/>
    <property type="project" value="GO_Central"/>
</dbReference>
<dbReference type="GO" id="GO:0005634">
    <property type="term" value="C:nucleus"/>
    <property type="evidence" value="ECO:0000318"/>
    <property type="project" value="GO_Central"/>
</dbReference>
<dbReference type="GO" id="GO:0005504">
    <property type="term" value="F:fatty acid binding"/>
    <property type="evidence" value="ECO:0000318"/>
    <property type="project" value="GO_Central"/>
</dbReference>
<dbReference type="GO" id="GO:0008289">
    <property type="term" value="F:lipid binding"/>
    <property type="evidence" value="ECO:0000304"/>
    <property type="project" value="ProtInc"/>
</dbReference>
<dbReference type="GO" id="GO:0050673">
    <property type="term" value="P:epithelial cell proliferation"/>
    <property type="evidence" value="ECO:0007669"/>
    <property type="project" value="Ensembl"/>
</dbReference>
<dbReference type="GO" id="GO:0015908">
    <property type="term" value="P:fatty acid transport"/>
    <property type="evidence" value="ECO:0000318"/>
    <property type="project" value="GO_Central"/>
</dbReference>
<dbReference type="GO" id="GO:0008285">
    <property type="term" value="P:negative regulation of cell population proliferation"/>
    <property type="evidence" value="ECO:0000304"/>
    <property type="project" value="ProtInc"/>
</dbReference>
<dbReference type="GO" id="GO:0007399">
    <property type="term" value="P:nervous system development"/>
    <property type="evidence" value="ECO:0000304"/>
    <property type="project" value="ProtInc"/>
</dbReference>
<dbReference type="CDD" id="cd19470">
    <property type="entry name" value="FABP7"/>
    <property type="match status" value="1"/>
</dbReference>
<dbReference type="FunFam" id="2.40.128.20:FF:000001">
    <property type="entry name" value="Fatty acid-binding protein, adipocyte"/>
    <property type="match status" value="1"/>
</dbReference>
<dbReference type="Gene3D" id="2.40.128.20">
    <property type="match status" value="1"/>
</dbReference>
<dbReference type="InterPro" id="IPR012674">
    <property type="entry name" value="Calycin"/>
</dbReference>
<dbReference type="InterPro" id="IPR000463">
    <property type="entry name" value="Fatty_acid-bd"/>
</dbReference>
<dbReference type="InterPro" id="IPR031259">
    <property type="entry name" value="ILBP"/>
</dbReference>
<dbReference type="InterPro" id="IPR000566">
    <property type="entry name" value="Lipocln_cytosolic_FA-bd_dom"/>
</dbReference>
<dbReference type="PANTHER" id="PTHR11955">
    <property type="entry name" value="FATTY ACID BINDING PROTEIN"/>
    <property type="match status" value="1"/>
</dbReference>
<dbReference type="Pfam" id="PF00061">
    <property type="entry name" value="Lipocalin"/>
    <property type="match status" value="1"/>
</dbReference>
<dbReference type="PRINTS" id="PR00178">
    <property type="entry name" value="FATTYACIDBP"/>
</dbReference>
<dbReference type="SUPFAM" id="SSF50814">
    <property type="entry name" value="Lipocalins"/>
    <property type="match status" value="1"/>
</dbReference>
<dbReference type="PROSITE" id="PS00214">
    <property type="entry name" value="FABP"/>
    <property type="match status" value="1"/>
</dbReference>
<evidence type="ECO:0000250" key="1"/>
<evidence type="ECO:0000250" key="2">
    <source>
        <dbReference type="UniProtKB" id="Q09139"/>
    </source>
</evidence>
<evidence type="ECO:0000303" key="3">
    <source>
    </source>
</evidence>
<evidence type="ECO:0000303" key="4">
    <source>
    </source>
</evidence>
<evidence type="ECO:0000305" key="5"/>
<evidence type="ECO:0007829" key="6">
    <source>
        <dbReference type="PDB" id="1JJX"/>
    </source>
</evidence>
<evidence type="ECO:0007829" key="7">
    <source>
        <dbReference type="PDB" id="6L9O"/>
    </source>
</evidence>
<sequence length="132" mass="14889">MVEAFCATWKLTNSQNFDEYMKALGVGFATRQVGNVTKPTVIISQEGDKVVIRTLSTFKNTEISFQLGEEFDETTADDRNCKSVVSLDGDKLVHIQKWDGKETNFVREIKDGKMVMTLTFGDVVAVRHYEKA</sequence>
<gene>
    <name type="primary">FABP7</name>
    <name type="synonym">BLBP</name>
    <name type="synonym">FABPB</name>
    <name type="synonym">MRG</name>
</gene>
<comment type="function">
    <text evidence="1">B-FABP could be involved in the transport of a so far unknown hydrophobic ligand with potential morphogenic activity during CNS development. It is required for the establishment of the radial glial fiber system in developing brain, a system that is necessary for the migration of immature neurons to establish cortical layers (By similarity).</text>
</comment>
<comment type="interaction">
    <interactant intactId="EBI-10697159">
        <id>O15540</id>
    </interactant>
    <interactant intactId="EBI-10976677">
        <id>G5E9A7</id>
        <label>DMWD</label>
    </interactant>
    <organismsDiffer>false</organismsDiffer>
    <experiments>3</experiments>
</comment>
<comment type="interaction">
    <interactant intactId="EBI-10697159">
        <id>O15540</id>
    </interactant>
    <interactant intactId="EBI-15639515">
        <id>O15354</id>
        <label>GPR37</label>
    </interactant>
    <organismsDiffer>false</organismsDiffer>
    <experiments>3</experiments>
</comment>
<comment type="interaction">
    <interactant intactId="EBI-10697159">
        <id>O15540</id>
    </interactant>
    <interactant intactId="EBI-747754">
        <id>P28799</id>
        <label>GRN</label>
    </interactant>
    <organismsDiffer>false</organismsDiffer>
    <experiments>3</experiments>
</comment>
<comment type="interaction">
    <interactant intactId="EBI-10697159">
        <id>O15540</id>
    </interactant>
    <interactant intactId="EBI-25860013">
        <id>P28799-2</id>
        <label>GRN</label>
    </interactant>
    <organismsDiffer>false</organismsDiffer>
    <experiments>3</experiments>
</comment>
<comment type="interaction">
    <interactant intactId="EBI-10697159">
        <id>O15540</id>
    </interactant>
    <interactant intactId="EBI-10975473">
        <id>O60333-2</id>
        <label>KIF1B</label>
    </interactant>
    <organismsDiffer>false</organismsDiffer>
    <experiments>3</experiments>
</comment>
<comment type="interaction">
    <interactant intactId="EBI-10697159">
        <id>O15540</id>
    </interactant>
    <interactant intactId="EBI-50433196">
        <id>A0A6Q8PF08</id>
        <label>PMP22</label>
    </interactant>
    <organismsDiffer>false</organismsDiffer>
    <experiments>3</experiments>
</comment>
<comment type="interaction">
    <interactant intactId="EBI-10697159">
        <id>O15540</id>
    </interactant>
    <interactant intactId="EBI-396669">
        <id>Q9Y3C5</id>
        <label>RNF11</label>
    </interactant>
    <organismsDiffer>false</organismsDiffer>
    <experiments>3</experiments>
</comment>
<comment type="interaction">
    <interactant intactId="EBI-10697159">
        <id>O15540</id>
    </interactant>
    <interactant intactId="EBI-5235340">
        <id>Q7Z699</id>
        <label>SPRED1</label>
    </interactant>
    <organismsDiffer>false</organismsDiffer>
    <experiments>3</experiments>
</comment>
<comment type="interaction">
    <interactant intactId="EBI-10697159">
        <id>O15540</id>
    </interactant>
    <interactant intactId="EBI-720609">
        <id>O76024</id>
        <label>WFS1</label>
    </interactant>
    <organismsDiffer>false</organismsDiffer>
    <experiments>3</experiments>
</comment>
<comment type="subcellular location">
    <subcellularLocation>
        <location>Cytoplasm</location>
    </subcellularLocation>
</comment>
<comment type="alternative products">
    <event type="alternative splicing"/>
    <isoform>
        <id>O15540-1</id>
        <name>1</name>
        <sequence type="displayed"/>
    </isoform>
    <isoform>
        <id>O15540-2</id>
        <name>2</name>
        <sequence type="described" ref="VSP_055490"/>
    </isoform>
</comment>
<comment type="tissue specificity">
    <text>Expressed in brain and other neural tissues.</text>
</comment>
<comment type="domain">
    <text>Forms a beta-barrel structure that accommodates the hydrophobic ligand in its interior.</text>
</comment>
<comment type="similarity">
    <text evidence="5">Belongs to the calycin superfamily. Fatty-acid binding protein (FABP) family.</text>
</comment>
<protein>
    <recommendedName>
        <fullName>Fatty acid-binding protein, brain</fullName>
    </recommendedName>
    <alternativeName>
        <fullName>Brain lipid-binding protein</fullName>
        <shortName>BLBP</shortName>
    </alternativeName>
    <alternativeName>
        <fullName>Brain-type fatty acid-binding protein</fullName>
        <shortName>B-FABP</shortName>
    </alternativeName>
    <alternativeName>
        <fullName>Fatty acid-binding protein 7</fullName>
    </alternativeName>
    <alternativeName>
        <fullName>Mammary-derived growth inhibitor related</fullName>
    </alternativeName>
</protein>
<accession>O15540</accession>
<accession>B2R4L1</accession>
<accession>O14951</accession>
<accession>Q6IAU7</accession>
<accession>Q9H047</accession>
<feature type="initiator methionine" description="Removed" evidence="2">
    <location>
        <position position="1"/>
    </location>
</feature>
<feature type="chain" id="PRO_0000067373" description="Fatty acid-binding protein, brain">
    <location>
        <begin position="2"/>
        <end position="132"/>
    </location>
</feature>
<feature type="binding site">
    <location>
        <begin position="127"/>
        <end position="129"/>
    </location>
    <ligand>
        <name>a fatty acid</name>
        <dbReference type="ChEBI" id="CHEBI:28868"/>
    </ligand>
</feature>
<feature type="modified residue" description="N-acetylvaline" evidence="2">
    <location>
        <position position="2"/>
    </location>
</feature>
<feature type="splice variant" id="VSP_055490" description="In isoform 2." evidence="3 4">
    <original>TLTFGDVVAVRHYEKA</original>
    <variation>VSNDNSPFFLVFFSSPHTSHLLPSSSLLLPFFLLPSFFNNTSLARFFNYM</variation>
    <location>
        <begin position="117"/>
        <end position="132"/>
    </location>
</feature>
<feature type="sequence variant" id="VAR_049012" description="In dbSNP:rs2279381.">
    <original>T</original>
    <variation>M</variation>
    <location>
        <position position="61"/>
    </location>
</feature>
<feature type="sequence conflict" description="In Ref. 4; BAA23324." evidence="5" ref="4">
    <original>N</original>
    <variation>D</variation>
    <location>
        <position position="60"/>
    </location>
</feature>
<feature type="sequence conflict" description="In Ref. 6; CAG33338." evidence="5" ref="6">
    <original>K</original>
    <variation>R</variation>
    <location>
        <position position="110"/>
    </location>
</feature>
<feature type="helix" evidence="7">
    <location>
        <begin position="2"/>
        <end position="5"/>
    </location>
</feature>
<feature type="strand" evidence="7">
    <location>
        <begin position="7"/>
        <end position="16"/>
    </location>
</feature>
<feature type="helix" evidence="7">
    <location>
        <begin position="17"/>
        <end position="24"/>
    </location>
</feature>
<feature type="helix" evidence="7">
    <location>
        <begin position="28"/>
        <end position="36"/>
    </location>
</feature>
<feature type="strand" evidence="7">
    <location>
        <begin position="40"/>
        <end position="46"/>
    </location>
</feature>
<feature type="strand" evidence="7">
    <location>
        <begin position="49"/>
        <end position="55"/>
    </location>
</feature>
<feature type="strand" evidence="7">
    <location>
        <begin position="61"/>
        <end position="65"/>
    </location>
</feature>
<feature type="strand" evidence="7">
    <location>
        <begin position="71"/>
        <end position="74"/>
    </location>
</feature>
<feature type="turn" evidence="6">
    <location>
        <begin position="76"/>
        <end position="78"/>
    </location>
</feature>
<feature type="strand" evidence="7">
    <location>
        <begin position="80"/>
        <end position="88"/>
    </location>
</feature>
<feature type="strand" evidence="7">
    <location>
        <begin position="91"/>
        <end position="98"/>
    </location>
</feature>
<feature type="strand" evidence="7">
    <location>
        <begin position="101"/>
        <end position="110"/>
    </location>
</feature>
<feature type="strand" evidence="7">
    <location>
        <begin position="113"/>
        <end position="120"/>
    </location>
</feature>
<feature type="strand" evidence="7">
    <location>
        <begin position="123"/>
        <end position="132"/>
    </location>
</feature>
<organism>
    <name type="scientific">Homo sapiens</name>
    <name type="common">Human</name>
    <dbReference type="NCBI Taxonomy" id="9606"/>
    <lineage>
        <taxon>Eukaryota</taxon>
        <taxon>Metazoa</taxon>
        <taxon>Chordata</taxon>
        <taxon>Craniata</taxon>
        <taxon>Vertebrata</taxon>
        <taxon>Euteleostomi</taxon>
        <taxon>Mammalia</taxon>
        <taxon>Eutheria</taxon>
        <taxon>Euarchontoglires</taxon>
        <taxon>Primates</taxon>
        <taxon>Haplorrhini</taxon>
        <taxon>Catarrhini</taxon>
        <taxon>Hominidae</taxon>
        <taxon>Homo</taxon>
    </lineage>
</organism>
<proteinExistence type="evidence at protein level"/>
<keyword id="KW-0002">3D-structure</keyword>
<keyword id="KW-0007">Acetylation</keyword>
<keyword id="KW-0025">Alternative splicing</keyword>
<keyword id="KW-0963">Cytoplasm</keyword>
<keyword id="KW-0903">Direct protein sequencing</keyword>
<keyword id="KW-0446">Lipid-binding</keyword>
<keyword id="KW-1267">Proteomics identification</keyword>
<keyword id="KW-1185">Reference proteome</keyword>
<keyword id="KW-0813">Transport</keyword>
<reference key="1">
    <citation type="submission" date="1997-11" db="EMBL/GenBank/DDBJ databases">
        <title>Human brain-type fatty acid binding protein shows high affinity for omega-3 fatty acids but not for omega-6 fatty acids.</title>
        <authorList>
            <person name="Schnuetgen F."/>
            <person name="Boerchers T."/>
            <person name="Xhong N."/>
            <person name="Godbout R."/>
            <person name="Sacchettini J.C."/>
            <person name="Spener F."/>
        </authorList>
    </citation>
    <scope>NUCLEOTIDE SEQUENCE [MRNA] (ISOFORM 1)</scope>
    <source>
        <tissue>Brain</tissue>
    </source>
</reference>
<reference key="2">
    <citation type="journal article" date="1997" name="Biochim. Biophys. Acta">
        <title>Isolation and expression of a cDNA for human brain fatty acid-binding protein (B-FABP).</title>
        <authorList>
            <person name="Shimizu F."/>
            <person name="Watanabe T.K."/>
            <person name="Shinomiya H."/>
            <person name="Nakamura Y."/>
            <person name="Fujiwara T."/>
        </authorList>
    </citation>
    <scope>NUCLEOTIDE SEQUENCE [MRNA] (ISOFORM 1)</scope>
    <source>
        <tissue>Brain</tissue>
    </source>
</reference>
<reference key="3">
    <citation type="journal article" date="1998" name="Oncogene">
        <title>Correlation of B-FABP and GFAP expression in malignant glioma.</title>
        <authorList>
            <person name="Godbout R."/>
            <person name="Bisgrove D.A."/>
            <person name="Shkolny D."/>
            <person name="Day R.S. III"/>
        </authorList>
    </citation>
    <scope>NUCLEOTIDE SEQUENCE [MRNA] (ISOFORM 1)</scope>
    <source>
        <tissue>Retina</tissue>
    </source>
</reference>
<reference key="4">
    <citation type="submission" date="1995-04" db="EMBL/GenBank/DDBJ databases">
        <authorList>
            <person name="Fujiwara T."/>
            <person name="Kawai A."/>
            <person name="Shimizu F."/>
            <person name="Shinomiya K."/>
            <person name="Hirano H."/>
            <person name="Okuno S."/>
            <person name="Ozaki K."/>
            <person name="Katagiri T."/>
            <person name="Takeda S."/>
            <person name="Kuga Y."/>
            <person name="Shimada Y."/>
            <person name="Nagata M."/>
            <person name="Takaichi A."/>
            <person name="Watanabe T."/>
            <person name="Horie M."/>
            <person name="Nakamura Y."/>
            <person name="Takahashi E."/>
            <person name="Hirai Y."/>
        </authorList>
    </citation>
    <scope>NUCLEOTIDE SEQUENCE [MRNA] (ISOFORM 1)</scope>
    <source>
        <tissue>Fetal brain</tissue>
    </source>
</reference>
<reference key="5">
    <citation type="submission" date="1996-12" db="EMBL/GenBank/DDBJ databases">
        <title>Identification and characterization of a novel human tumor suppressor gene with homology to mammary derived growth inhibitor.</title>
        <authorList>
            <person name="Shi Y.E."/>
            <person name="Ni J."/>
        </authorList>
    </citation>
    <scope>NUCLEOTIDE SEQUENCE [MRNA] (ISOFORM 1)</scope>
</reference>
<reference key="6">
    <citation type="submission" date="2004-06" db="EMBL/GenBank/DDBJ databases">
        <title>Cloning of human full open reading frames in Gateway(TM) system entry vector (pDONR201).</title>
        <authorList>
            <person name="Ebert L."/>
            <person name="Schick M."/>
            <person name="Neubert P."/>
            <person name="Schatten R."/>
            <person name="Henze S."/>
            <person name="Korn B."/>
        </authorList>
    </citation>
    <scope>NUCLEOTIDE SEQUENCE [LARGE SCALE MRNA] (ISOFORM 1)</scope>
</reference>
<reference key="7">
    <citation type="journal article" date="2004" name="Nat. Genet.">
        <title>Complete sequencing and characterization of 21,243 full-length human cDNAs.</title>
        <authorList>
            <person name="Ota T."/>
            <person name="Suzuki Y."/>
            <person name="Nishikawa T."/>
            <person name="Otsuki T."/>
            <person name="Sugiyama T."/>
            <person name="Irie R."/>
            <person name="Wakamatsu A."/>
            <person name="Hayashi K."/>
            <person name="Sato H."/>
            <person name="Nagai K."/>
            <person name="Kimura K."/>
            <person name="Makita H."/>
            <person name="Sekine M."/>
            <person name="Obayashi M."/>
            <person name="Nishi T."/>
            <person name="Shibahara T."/>
            <person name="Tanaka T."/>
            <person name="Ishii S."/>
            <person name="Yamamoto J."/>
            <person name="Saito K."/>
            <person name="Kawai Y."/>
            <person name="Isono Y."/>
            <person name="Nakamura Y."/>
            <person name="Nagahari K."/>
            <person name="Murakami K."/>
            <person name="Yasuda T."/>
            <person name="Iwayanagi T."/>
            <person name="Wagatsuma M."/>
            <person name="Shiratori A."/>
            <person name="Sudo H."/>
            <person name="Hosoiri T."/>
            <person name="Kaku Y."/>
            <person name="Kodaira H."/>
            <person name="Kondo H."/>
            <person name="Sugawara M."/>
            <person name="Takahashi M."/>
            <person name="Kanda K."/>
            <person name="Yokoi T."/>
            <person name="Furuya T."/>
            <person name="Kikkawa E."/>
            <person name="Omura Y."/>
            <person name="Abe K."/>
            <person name="Kamihara K."/>
            <person name="Katsuta N."/>
            <person name="Sato K."/>
            <person name="Tanikawa M."/>
            <person name="Yamazaki M."/>
            <person name="Ninomiya K."/>
            <person name="Ishibashi T."/>
            <person name="Yamashita H."/>
            <person name="Murakawa K."/>
            <person name="Fujimori K."/>
            <person name="Tanai H."/>
            <person name="Kimata M."/>
            <person name="Watanabe M."/>
            <person name="Hiraoka S."/>
            <person name="Chiba Y."/>
            <person name="Ishida S."/>
            <person name="Ono Y."/>
            <person name="Takiguchi S."/>
            <person name="Watanabe S."/>
            <person name="Yosida M."/>
            <person name="Hotuta T."/>
            <person name="Kusano J."/>
            <person name="Kanehori K."/>
            <person name="Takahashi-Fujii A."/>
            <person name="Hara H."/>
            <person name="Tanase T.-O."/>
            <person name="Nomura Y."/>
            <person name="Togiya S."/>
            <person name="Komai F."/>
            <person name="Hara R."/>
            <person name="Takeuchi K."/>
            <person name="Arita M."/>
            <person name="Imose N."/>
            <person name="Musashino K."/>
            <person name="Yuuki H."/>
            <person name="Oshima A."/>
            <person name="Sasaki N."/>
            <person name="Aotsuka S."/>
            <person name="Yoshikawa Y."/>
            <person name="Matsunawa H."/>
            <person name="Ichihara T."/>
            <person name="Shiohata N."/>
            <person name="Sano S."/>
            <person name="Moriya S."/>
            <person name="Momiyama H."/>
            <person name="Satoh N."/>
            <person name="Takami S."/>
            <person name="Terashima Y."/>
            <person name="Suzuki O."/>
            <person name="Nakagawa S."/>
            <person name="Senoh A."/>
            <person name="Mizoguchi H."/>
            <person name="Goto Y."/>
            <person name="Shimizu F."/>
            <person name="Wakebe H."/>
            <person name="Hishigaki H."/>
            <person name="Watanabe T."/>
            <person name="Sugiyama A."/>
            <person name="Takemoto M."/>
            <person name="Kawakami B."/>
            <person name="Yamazaki M."/>
            <person name="Watanabe K."/>
            <person name="Kumagai A."/>
            <person name="Itakura S."/>
            <person name="Fukuzumi Y."/>
            <person name="Fujimori Y."/>
            <person name="Komiyama M."/>
            <person name="Tashiro H."/>
            <person name="Tanigami A."/>
            <person name="Fujiwara T."/>
            <person name="Ono T."/>
            <person name="Yamada K."/>
            <person name="Fujii Y."/>
            <person name="Ozaki K."/>
            <person name="Hirao M."/>
            <person name="Ohmori Y."/>
            <person name="Kawabata A."/>
            <person name="Hikiji T."/>
            <person name="Kobatake N."/>
            <person name="Inagaki H."/>
            <person name="Ikema Y."/>
            <person name="Okamoto S."/>
            <person name="Okitani R."/>
            <person name="Kawakami T."/>
            <person name="Noguchi S."/>
            <person name="Itoh T."/>
            <person name="Shigeta K."/>
            <person name="Senba T."/>
            <person name="Matsumura K."/>
            <person name="Nakajima Y."/>
            <person name="Mizuno T."/>
            <person name="Morinaga M."/>
            <person name="Sasaki M."/>
            <person name="Togashi T."/>
            <person name="Oyama M."/>
            <person name="Hata H."/>
            <person name="Watanabe M."/>
            <person name="Komatsu T."/>
            <person name="Mizushima-Sugano J."/>
            <person name="Satoh T."/>
            <person name="Shirai Y."/>
            <person name="Takahashi Y."/>
            <person name="Nakagawa K."/>
            <person name="Okumura K."/>
            <person name="Nagase T."/>
            <person name="Nomura N."/>
            <person name="Kikuchi H."/>
            <person name="Masuho Y."/>
            <person name="Yamashita R."/>
            <person name="Nakai K."/>
            <person name="Yada T."/>
            <person name="Nakamura Y."/>
            <person name="Ohara O."/>
            <person name="Isogai T."/>
            <person name="Sugano S."/>
        </authorList>
    </citation>
    <scope>NUCLEOTIDE SEQUENCE [LARGE SCALE MRNA] (ISOFORMS 1 AND 2)</scope>
    <source>
        <tissue>Brain</tissue>
    </source>
</reference>
<reference key="8">
    <citation type="journal article" date="2007" name="BMC Genomics">
        <title>The full-ORF clone resource of the German cDNA consortium.</title>
        <authorList>
            <person name="Bechtel S."/>
            <person name="Rosenfelder H."/>
            <person name="Duda A."/>
            <person name="Schmidt C.P."/>
            <person name="Ernst U."/>
            <person name="Wellenreuther R."/>
            <person name="Mehrle A."/>
            <person name="Schuster C."/>
            <person name="Bahr A."/>
            <person name="Bloecker H."/>
            <person name="Heubner D."/>
            <person name="Hoerlein A."/>
            <person name="Michel G."/>
            <person name="Wedler H."/>
            <person name="Koehrer K."/>
            <person name="Ottenwaelder B."/>
            <person name="Poustka A."/>
            <person name="Wiemann S."/>
            <person name="Schupp I."/>
        </authorList>
    </citation>
    <scope>NUCLEOTIDE SEQUENCE [LARGE SCALE MRNA] (ISOFORM 2)</scope>
    <source>
        <tissue>Brain</tissue>
    </source>
</reference>
<reference key="9">
    <citation type="journal article" date="2003" name="Nature">
        <title>The DNA sequence and analysis of human chromosome 6.</title>
        <authorList>
            <person name="Mungall A.J."/>
            <person name="Palmer S.A."/>
            <person name="Sims S.K."/>
            <person name="Edwards C.A."/>
            <person name="Ashurst J.L."/>
            <person name="Wilming L."/>
            <person name="Jones M.C."/>
            <person name="Horton R."/>
            <person name="Hunt S.E."/>
            <person name="Scott C.E."/>
            <person name="Gilbert J.G.R."/>
            <person name="Clamp M.E."/>
            <person name="Bethel G."/>
            <person name="Milne S."/>
            <person name="Ainscough R."/>
            <person name="Almeida J.P."/>
            <person name="Ambrose K.D."/>
            <person name="Andrews T.D."/>
            <person name="Ashwell R.I.S."/>
            <person name="Babbage A.K."/>
            <person name="Bagguley C.L."/>
            <person name="Bailey J."/>
            <person name="Banerjee R."/>
            <person name="Barker D.J."/>
            <person name="Barlow K.F."/>
            <person name="Bates K."/>
            <person name="Beare D.M."/>
            <person name="Beasley H."/>
            <person name="Beasley O."/>
            <person name="Bird C.P."/>
            <person name="Blakey S.E."/>
            <person name="Bray-Allen S."/>
            <person name="Brook J."/>
            <person name="Brown A.J."/>
            <person name="Brown J.Y."/>
            <person name="Burford D.C."/>
            <person name="Burrill W."/>
            <person name="Burton J."/>
            <person name="Carder C."/>
            <person name="Carter N.P."/>
            <person name="Chapman J.C."/>
            <person name="Clark S.Y."/>
            <person name="Clark G."/>
            <person name="Clee C.M."/>
            <person name="Clegg S."/>
            <person name="Cobley V."/>
            <person name="Collier R.E."/>
            <person name="Collins J.E."/>
            <person name="Colman L.K."/>
            <person name="Corby N.R."/>
            <person name="Coville G.J."/>
            <person name="Culley K.M."/>
            <person name="Dhami P."/>
            <person name="Davies J."/>
            <person name="Dunn M."/>
            <person name="Earthrowl M.E."/>
            <person name="Ellington A.E."/>
            <person name="Evans K.A."/>
            <person name="Faulkner L."/>
            <person name="Francis M.D."/>
            <person name="Frankish A."/>
            <person name="Frankland J."/>
            <person name="French L."/>
            <person name="Garner P."/>
            <person name="Garnett J."/>
            <person name="Ghori M.J."/>
            <person name="Gilby L.M."/>
            <person name="Gillson C.J."/>
            <person name="Glithero R.J."/>
            <person name="Grafham D.V."/>
            <person name="Grant M."/>
            <person name="Gribble S."/>
            <person name="Griffiths C."/>
            <person name="Griffiths M.N.D."/>
            <person name="Hall R."/>
            <person name="Halls K.S."/>
            <person name="Hammond S."/>
            <person name="Harley J.L."/>
            <person name="Hart E.A."/>
            <person name="Heath P.D."/>
            <person name="Heathcott R."/>
            <person name="Holmes S.J."/>
            <person name="Howden P.J."/>
            <person name="Howe K.L."/>
            <person name="Howell G.R."/>
            <person name="Huckle E."/>
            <person name="Humphray S.J."/>
            <person name="Humphries M.D."/>
            <person name="Hunt A.R."/>
            <person name="Johnson C.M."/>
            <person name="Joy A.A."/>
            <person name="Kay M."/>
            <person name="Keenan S.J."/>
            <person name="Kimberley A.M."/>
            <person name="King A."/>
            <person name="Laird G.K."/>
            <person name="Langford C."/>
            <person name="Lawlor S."/>
            <person name="Leongamornlert D.A."/>
            <person name="Leversha M."/>
            <person name="Lloyd C.R."/>
            <person name="Lloyd D.M."/>
            <person name="Loveland J.E."/>
            <person name="Lovell J."/>
            <person name="Martin S."/>
            <person name="Mashreghi-Mohammadi M."/>
            <person name="Maslen G.L."/>
            <person name="Matthews L."/>
            <person name="McCann O.T."/>
            <person name="McLaren S.J."/>
            <person name="McLay K."/>
            <person name="McMurray A."/>
            <person name="Moore M.J.F."/>
            <person name="Mullikin J.C."/>
            <person name="Niblett D."/>
            <person name="Nickerson T."/>
            <person name="Novik K.L."/>
            <person name="Oliver K."/>
            <person name="Overton-Larty E.K."/>
            <person name="Parker A."/>
            <person name="Patel R."/>
            <person name="Pearce A.V."/>
            <person name="Peck A.I."/>
            <person name="Phillimore B.J.C.T."/>
            <person name="Phillips S."/>
            <person name="Plumb R.W."/>
            <person name="Porter K.M."/>
            <person name="Ramsey Y."/>
            <person name="Ranby S.A."/>
            <person name="Rice C.M."/>
            <person name="Ross M.T."/>
            <person name="Searle S.M."/>
            <person name="Sehra H.K."/>
            <person name="Sheridan E."/>
            <person name="Skuce C.D."/>
            <person name="Smith S."/>
            <person name="Smith M."/>
            <person name="Spraggon L."/>
            <person name="Squares S.L."/>
            <person name="Steward C.A."/>
            <person name="Sycamore N."/>
            <person name="Tamlyn-Hall G."/>
            <person name="Tester J."/>
            <person name="Theaker A.J."/>
            <person name="Thomas D.W."/>
            <person name="Thorpe A."/>
            <person name="Tracey A."/>
            <person name="Tromans A."/>
            <person name="Tubby B."/>
            <person name="Wall M."/>
            <person name="Wallis J.M."/>
            <person name="West A.P."/>
            <person name="White S.S."/>
            <person name="Whitehead S.L."/>
            <person name="Whittaker H."/>
            <person name="Wild A."/>
            <person name="Willey D.J."/>
            <person name="Wilmer T.E."/>
            <person name="Wood J.M."/>
            <person name="Wray P.W."/>
            <person name="Wyatt J.C."/>
            <person name="Young L."/>
            <person name="Younger R.M."/>
            <person name="Bentley D.R."/>
            <person name="Coulson A."/>
            <person name="Durbin R.M."/>
            <person name="Hubbard T."/>
            <person name="Sulston J.E."/>
            <person name="Dunham I."/>
            <person name="Rogers J."/>
            <person name="Beck S."/>
        </authorList>
    </citation>
    <scope>NUCLEOTIDE SEQUENCE [LARGE SCALE GENOMIC DNA]</scope>
</reference>
<reference key="10">
    <citation type="submission" date="2005-09" db="EMBL/GenBank/DDBJ databases">
        <authorList>
            <person name="Mural R.J."/>
            <person name="Istrail S."/>
            <person name="Sutton G.G."/>
            <person name="Florea L."/>
            <person name="Halpern A.L."/>
            <person name="Mobarry C.M."/>
            <person name="Lippert R."/>
            <person name="Walenz B."/>
            <person name="Shatkay H."/>
            <person name="Dew I."/>
            <person name="Miller J.R."/>
            <person name="Flanigan M.J."/>
            <person name="Edwards N.J."/>
            <person name="Bolanos R."/>
            <person name="Fasulo D."/>
            <person name="Halldorsson B.V."/>
            <person name="Hannenhalli S."/>
            <person name="Turner R."/>
            <person name="Yooseph S."/>
            <person name="Lu F."/>
            <person name="Nusskern D.R."/>
            <person name="Shue B.C."/>
            <person name="Zheng X.H."/>
            <person name="Zhong F."/>
            <person name="Delcher A.L."/>
            <person name="Huson D.H."/>
            <person name="Kravitz S.A."/>
            <person name="Mouchard L."/>
            <person name="Reinert K."/>
            <person name="Remington K.A."/>
            <person name="Clark A.G."/>
            <person name="Waterman M.S."/>
            <person name="Eichler E.E."/>
            <person name="Adams M.D."/>
            <person name="Hunkapiller M.W."/>
            <person name="Myers E.W."/>
            <person name="Venter J.C."/>
        </authorList>
    </citation>
    <scope>NUCLEOTIDE SEQUENCE [LARGE SCALE GENOMIC DNA]</scope>
</reference>
<reference key="11">
    <citation type="journal article" date="2004" name="Genome Res.">
        <title>The status, quality, and expansion of the NIH full-length cDNA project: the Mammalian Gene Collection (MGC).</title>
        <authorList>
            <consortium name="The MGC Project Team"/>
        </authorList>
    </citation>
    <scope>NUCLEOTIDE SEQUENCE [LARGE SCALE MRNA] (ISOFORM 1)</scope>
    <source>
        <tissue>Mammary gland</tissue>
    </source>
</reference>
<reference key="12">
    <citation type="submission" date="2008-12" db="UniProtKB">
        <authorList>
            <person name="Lubec G."/>
            <person name="Vishwanath V."/>
            <person name="Chen W.-Q."/>
            <person name="Sun Y."/>
        </authorList>
    </citation>
    <scope>PROTEIN SEQUENCE OF 11-53; 60-79; 83-97 AND 114-127</scope>
    <scope>IDENTIFICATION BY MASS SPECTROMETRY</scope>
    <source>
        <tissue>Brain</tissue>
        <tissue>Cajal-Retzius cell</tissue>
        <tissue>Fetal brain cortex</tissue>
    </source>
</reference>
<reference key="13">
    <citation type="journal article" date="2000" name="J. Biol. Chem.">
        <title>Crystal structure and thermodynamic analysis of human brain fatty acid-binding protein.</title>
        <authorList>
            <person name="Balendiran G.K."/>
            <person name="Schnuetgen F."/>
            <person name="Scapin G."/>
            <person name="Boerchers T."/>
            <person name="Xhong N."/>
            <person name="Lim K."/>
            <person name="Godbout R."/>
            <person name="Spener F."/>
            <person name="Sacchettini J.C."/>
        </authorList>
    </citation>
    <scope>X-RAY CRYSTALLOGRAPHY (2.8 ANGSTROMS) IN COMPLEX WITH FATTY ACID</scope>
</reference>
<reference key="14">
    <citation type="journal article" date="2002" name="Mol. Cell. Biochem.">
        <title>Solution structure of fatty acid-binding protein from human brain.</title>
        <authorList>
            <person name="Rademacher M."/>
            <person name="Zimmerman A.W."/>
            <person name="Rueterjans H."/>
            <person name="Veerkamp J.H."/>
            <person name="Luecke C."/>
        </authorList>
    </citation>
    <scope>STRUCTURE BY NMR</scope>
</reference>
<name>FABP7_HUMAN</name>